<organism>
    <name type="scientific">Buchnera aphidicola subsp. Acyrthosiphon pisum (strain APS)</name>
    <name type="common">Acyrthosiphon pisum symbiotic bacterium</name>
    <dbReference type="NCBI Taxonomy" id="107806"/>
    <lineage>
        <taxon>Bacteria</taxon>
        <taxon>Pseudomonadati</taxon>
        <taxon>Pseudomonadota</taxon>
        <taxon>Gammaproteobacteria</taxon>
        <taxon>Enterobacterales</taxon>
        <taxon>Erwiniaceae</taxon>
        <taxon>Buchnera</taxon>
    </lineage>
</organism>
<name>NFUA_BUCAI</name>
<dbReference type="EMBL" id="BA000003">
    <property type="protein sequence ID" value="BAB13236.1"/>
    <property type="molecule type" value="Genomic_DNA"/>
</dbReference>
<dbReference type="RefSeq" id="NP_240350.1">
    <property type="nucleotide sequence ID" value="NC_002528.1"/>
</dbReference>
<dbReference type="RefSeq" id="WP_010896157.1">
    <property type="nucleotide sequence ID" value="NC_002528.1"/>
</dbReference>
<dbReference type="SMR" id="P57609"/>
<dbReference type="STRING" id="563178.BUAP5A_537"/>
<dbReference type="EnsemblBacteria" id="BAB13236">
    <property type="protein sequence ID" value="BAB13236"/>
    <property type="gene ID" value="BAB13236"/>
</dbReference>
<dbReference type="KEGG" id="buc:BU544"/>
<dbReference type="PATRIC" id="fig|107806.10.peg.548"/>
<dbReference type="eggNOG" id="COG0316">
    <property type="taxonomic scope" value="Bacteria"/>
</dbReference>
<dbReference type="eggNOG" id="COG0694">
    <property type="taxonomic scope" value="Bacteria"/>
</dbReference>
<dbReference type="HOGENOM" id="CLU_094569_0_0_6"/>
<dbReference type="Proteomes" id="UP000001806">
    <property type="component" value="Chromosome"/>
</dbReference>
<dbReference type="GO" id="GO:0051539">
    <property type="term" value="F:4 iron, 4 sulfur cluster binding"/>
    <property type="evidence" value="ECO:0007669"/>
    <property type="project" value="UniProtKB-UniRule"/>
</dbReference>
<dbReference type="GO" id="GO:0005506">
    <property type="term" value="F:iron ion binding"/>
    <property type="evidence" value="ECO:0007669"/>
    <property type="project" value="InterPro"/>
</dbReference>
<dbReference type="GO" id="GO:0016226">
    <property type="term" value="P:iron-sulfur cluster assembly"/>
    <property type="evidence" value="ECO:0007669"/>
    <property type="project" value="UniProtKB-UniRule"/>
</dbReference>
<dbReference type="GO" id="GO:0051604">
    <property type="term" value="P:protein maturation"/>
    <property type="evidence" value="ECO:0007669"/>
    <property type="project" value="UniProtKB-UniRule"/>
</dbReference>
<dbReference type="Gene3D" id="3.30.300.130">
    <property type="entry name" value="Fe-S cluster assembly (FSCA)"/>
    <property type="match status" value="1"/>
</dbReference>
<dbReference type="Gene3D" id="2.60.300.12">
    <property type="entry name" value="HesB-like domain"/>
    <property type="match status" value="1"/>
</dbReference>
<dbReference type="HAMAP" id="MF_01637">
    <property type="entry name" value="Fe_S_biogen_NfuA"/>
    <property type="match status" value="1"/>
</dbReference>
<dbReference type="InterPro" id="IPR017726">
    <property type="entry name" value="Fe/S_biogenesis_protein_NfuA"/>
</dbReference>
<dbReference type="InterPro" id="IPR000361">
    <property type="entry name" value="FeS_biogenesis"/>
</dbReference>
<dbReference type="InterPro" id="IPR034904">
    <property type="entry name" value="FSCA_dom_sf"/>
</dbReference>
<dbReference type="InterPro" id="IPR035903">
    <property type="entry name" value="HesB-like_dom_sf"/>
</dbReference>
<dbReference type="InterPro" id="IPR001075">
    <property type="entry name" value="NIF_FeS_clus_asmbl_NifU_C"/>
</dbReference>
<dbReference type="Pfam" id="PF01521">
    <property type="entry name" value="Fe-S_biosyn"/>
    <property type="match status" value="1"/>
</dbReference>
<dbReference type="Pfam" id="PF01106">
    <property type="entry name" value="NifU"/>
    <property type="match status" value="1"/>
</dbReference>
<dbReference type="SUPFAM" id="SSF117916">
    <property type="entry name" value="Fe-S cluster assembly (FSCA) domain-like"/>
    <property type="match status" value="1"/>
</dbReference>
<dbReference type="SUPFAM" id="SSF89360">
    <property type="entry name" value="HesB-like domain"/>
    <property type="match status" value="1"/>
</dbReference>
<proteinExistence type="inferred from homology"/>
<gene>
    <name evidence="1" type="primary">nfuA</name>
    <name type="ordered locus">BU544</name>
</gene>
<accession>P57609</accession>
<feature type="chain" id="PRO_0000209471" description="Fe/S biogenesis protein NfuA">
    <location>
        <begin position="1"/>
        <end position="192"/>
    </location>
</feature>
<feature type="binding site" evidence="1">
    <location>
        <position position="150"/>
    </location>
    <ligand>
        <name>[4Fe-4S] cluster</name>
        <dbReference type="ChEBI" id="CHEBI:49883"/>
    </ligand>
</feature>
<feature type="binding site" evidence="1">
    <location>
        <position position="153"/>
    </location>
    <ligand>
        <name>[4Fe-4S] cluster</name>
        <dbReference type="ChEBI" id="CHEBI:49883"/>
    </ligand>
</feature>
<protein>
    <recommendedName>
        <fullName evidence="1">Fe/S biogenesis protein NfuA</fullName>
    </recommendedName>
</protein>
<comment type="function">
    <text evidence="1">Involved in iron-sulfur cluster biogenesis. Binds a 4Fe-4S cluster, can transfer this cluster to apoproteins, and thereby intervenes in the maturation of Fe/S proteins. Could also act as a scaffold/chaperone for damaged Fe/S proteins.</text>
</comment>
<comment type="cofactor">
    <cofactor evidence="1">
        <name>[4Fe-4S] cluster</name>
        <dbReference type="ChEBI" id="CHEBI:49883"/>
    </cofactor>
    <text evidence="1">Binds 1 [4Fe-4S] cluster per subunit. The cluster is presumably bound at the interface of two monomers.</text>
</comment>
<comment type="subunit">
    <text evidence="1">Homodimer.</text>
</comment>
<comment type="similarity">
    <text evidence="1">Belongs to the NfuA family.</text>
</comment>
<reference key="1">
    <citation type="journal article" date="2000" name="Nature">
        <title>Genome sequence of the endocellular bacterial symbiont of aphids Buchnera sp. APS.</title>
        <authorList>
            <person name="Shigenobu S."/>
            <person name="Watanabe H."/>
            <person name="Hattori M."/>
            <person name="Sakaki Y."/>
            <person name="Ishikawa H."/>
        </authorList>
    </citation>
    <scope>NUCLEOTIDE SEQUENCE [LARGE SCALE GENOMIC DNA]</scope>
    <source>
        <strain>APS</strain>
    </source>
</reference>
<evidence type="ECO:0000255" key="1">
    <source>
        <dbReference type="HAMAP-Rule" id="MF_01637"/>
    </source>
</evidence>
<sequence>MINISKKAQEHFTSLLSNEPENTQIRVFIVNPGTPNAECGVAFCPENEIELSDIQLKYDGFFVYVNKDTISYLKNSVIDLVTDKIGSQLTLKAPYAKNNFSKKVSSSLEEKVKCFLNLEINPQLSMHGGRVELIKIDKNGIAAIQFSGGCNGCSMIGSTLKETVEKKLLSSFSEIKKVYDETHHLHGQHSFY</sequence>
<keyword id="KW-0004">4Fe-4S</keyword>
<keyword id="KW-0408">Iron</keyword>
<keyword id="KW-0411">Iron-sulfur</keyword>
<keyword id="KW-0479">Metal-binding</keyword>
<keyword id="KW-1185">Reference proteome</keyword>